<proteinExistence type="inferred from homology"/>
<accession>Q09925</accession>
<protein>
    <recommendedName>
        <fullName>Serine palmitoyltransferase 2</fullName>
        <shortName>SPT 2</shortName>
        <ecNumber>2.3.1.50</ecNumber>
    </recommendedName>
    <alternativeName>
        <fullName>Long chain base biosynthesis protein 2</fullName>
    </alternativeName>
</protein>
<reference key="1">
    <citation type="journal article" date="1996" name="Gene">
        <title>Sphingolipid synthesis: identification and characterization of mammalian cDNAs encoding the Lcb2 subunit of serine palmitoyltransferase.</title>
        <authorList>
            <person name="Nagiec M.M."/>
            <person name="Lester R.L."/>
            <person name="Dickson R.C."/>
        </authorList>
    </citation>
    <scope>NUCLEOTIDE SEQUENCE [GENOMIC DNA]</scope>
    <source>
        <strain>972 / ATCC 24843</strain>
    </source>
</reference>
<reference key="2">
    <citation type="journal article" date="2002" name="Nature">
        <title>The genome sequence of Schizosaccharomyces pombe.</title>
        <authorList>
            <person name="Wood V."/>
            <person name="Gwilliam R."/>
            <person name="Rajandream M.A."/>
            <person name="Lyne M.H."/>
            <person name="Lyne R."/>
            <person name="Stewart A."/>
            <person name="Sgouros J.G."/>
            <person name="Peat N."/>
            <person name="Hayles J."/>
            <person name="Baker S.G."/>
            <person name="Basham D."/>
            <person name="Bowman S."/>
            <person name="Brooks K."/>
            <person name="Brown D."/>
            <person name="Brown S."/>
            <person name="Chillingworth T."/>
            <person name="Churcher C.M."/>
            <person name="Collins M."/>
            <person name="Connor R."/>
            <person name="Cronin A."/>
            <person name="Davis P."/>
            <person name="Feltwell T."/>
            <person name="Fraser A."/>
            <person name="Gentles S."/>
            <person name="Goble A."/>
            <person name="Hamlin N."/>
            <person name="Harris D.E."/>
            <person name="Hidalgo J."/>
            <person name="Hodgson G."/>
            <person name="Holroyd S."/>
            <person name="Hornsby T."/>
            <person name="Howarth S."/>
            <person name="Huckle E.J."/>
            <person name="Hunt S."/>
            <person name="Jagels K."/>
            <person name="James K.D."/>
            <person name="Jones L."/>
            <person name="Jones M."/>
            <person name="Leather S."/>
            <person name="McDonald S."/>
            <person name="McLean J."/>
            <person name="Mooney P."/>
            <person name="Moule S."/>
            <person name="Mungall K.L."/>
            <person name="Murphy L.D."/>
            <person name="Niblett D."/>
            <person name="Odell C."/>
            <person name="Oliver K."/>
            <person name="O'Neil S."/>
            <person name="Pearson D."/>
            <person name="Quail M.A."/>
            <person name="Rabbinowitsch E."/>
            <person name="Rutherford K.M."/>
            <person name="Rutter S."/>
            <person name="Saunders D."/>
            <person name="Seeger K."/>
            <person name="Sharp S."/>
            <person name="Skelton J."/>
            <person name="Simmonds M.N."/>
            <person name="Squares R."/>
            <person name="Squares S."/>
            <person name="Stevens K."/>
            <person name="Taylor K."/>
            <person name="Taylor R.G."/>
            <person name="Tivey A."/>
            <person name="Walsh S.V."/>
            <person name="Warren T."/>
            <person name="Whitehead S."/>
            <person name="Woodward J.R."/>
            <person name="Volckaert G."/>
            <person name="Aert R."/>
            <person name="Robben J."/>
            <person name="Grymonprez B."/>
            <person name="Weltjens I."/>
            <person name="Vanstreels E."/>
            <person name="Rieger M."/>
            <person name="Schaefer M."/>
            <person name="Mueller-Auer S."/>
            <person name="Gabel C."/>
            <person name="Fuchs M."/>
            <person name="Duesterhoeft A."/>
            <person name="Fritzc C."/>
            <person name="Holzer E."/>
            <person name="Moestl D."/>
            <person name="Hilbert H."/>
            <person name="Borzym K."/>
            <person name="Langer I."/>
            <person name="Beck A."/>
            <person name="Lehrach H."/>
            <person name="Reinhardt R."/>
            <person name="Pohl T.M."/>
            <person name="Eger P."/>
            <person name="Zimmermann W."/>
            <person name="Wedler H."/>
            <person name="Wambutt R."/>
            <person name="Purnelle B."/>
            <person name="Goffeau A."/>
            <person name="Cadieu E."/>
            <person name="Dreano S."/>
            <person name="Gloux S."/>
            <person name="Lelaure V."/>
            <person name="Mottier S."/>
            <person name="Galibert F."/>
            <person name="Aves S.J."/>
            <person name="Xiang Z."/>
            <person name="Hunt C."/>
            <person name="Moore K."/>
            <person name="Hurst S.M."/>
            <person name="Lucas M."/>
            <person name="Rochet M."/>
            <person name="Gaillardin C."/>
            <person name="Tallada V.A."/>
            <person name="Garzon A."/>
            <person name="Thode G."/>
            <person name="Daga R.R."/>
            <person name="Cruzado L."/>
            <person name="Jimenez J."/>
            <person name="Sanchez M."/>
            <person name="del Rey F."/>
            <person name="Benito J."/>
            <person name="Dominguez A."/>
            <person name="Revuelta J.L."/>
            <person name="Moreno S."/>
            <person name="Armstrong J."/>
            <person name="Forsburg S.L."/>
            <person name="Cerutti L."/>
            <person name="Lowe T."/>
            <person name="McCombie W.R."/>
            <person name="Paulsen I."/>
            <person name="Potashkin J."/>
            <person name="Shpakovski G.V."/>
            <person name="Ussery D."/>
            <person name="Barrell B.G."/>
            <person name="Nurse P."/>
        </authorList>
    </citation>
    <scope>NUCLEOTIDE SEQUENCE [LARGE SCALE GENOMIC DNA]</scope>
    <source>
        <strain>972 / ATCC 24843</strain>
    </source>
</reference>
<reference key="3">
    <citation type="journal article" date="2006" name="Nat. Biotechnol.">
        <title>ORFeome cloning and global analysis of protein localization in the fission yeast Schizosaccharomyces pombe.</title>
        <authorList>
            <person name="Matsuyama A."/>
            <person name="Arai R."/>
            <person name="Yashiroda Y."/>
            <person name="Shirai A."/>
            <person name="Kamata A."/>
            <person name="Sekido S."/>
            <person name="Kobayashi Y."/>
            <person name="Hashimoto A."/>
            <person name="Hamamoto M."/>
            <person name="Hiraoka Y."/>
            <person name="Horinouchi S."/>
            <person name="Yoshida M."/>
        </authorList>
    </citation>
    <scope>SUBCELLULAR LOCATION [LARGE SCALE ANALYSIS]</scope>
</reference>
<keyword id="KW-0012">Acyltransferase</keyword>
<keyword id="KW-0963">Cytoplasm</keyword>
<keyword id="KW-0256">Endoplasmic reticulum</keyword>
<keyword id="KW-0443">Lipid metabolism</keyword>
<keyword id="KW-0472">Membrane</keyword>
<keyword id="KW-0663">Pyridoxal phosphate</keyword>
<keyword id="KW-1185">Reference proteome</keyword>
<keyword id="KW-0746">Sphingolipid metabolism</keyword>
<keyword id="KW-0808">Transferase</keyword>
<keyword id="KW-0812">Transmembrane</keyword>
<keyword id="KW-1133">Transmembrane helix</keyword>
<name>LCB2_SCHPO</name>
<comment type="function">
    <text evidence="1">Catalytic subunit of serine palmitoyltransferase (SPT), which catalyzes the committed step in the synthesis of sphingolipids, the condensation of serine with palmitoyl CoA to form the long chain base 3-ketosphinganine.</text>
</comment>
<comment type="catalytic activity">
    <reaction>
        <text>L-serine + hexadecanoyl-CoA + H(+) = 3-oxosphinganine + CO2 + CoA</text>
        <dbReference type="Rhea" id="RHEA:14761"/>
        <dbReference type="ChEBI" id="CHEBI:15378"/>
        <dbReference type="ChEBI" id="CHEBI:16526"/>
        <dbReference type="ChEBI" id="CHEBI:33384"/>
        <dbReference type="ChEBI" id="CHEBI:57287"/>
        <dbReference type="ChEBI" id="CHEBI:57379"/>
        <dbReference type="ChEBI" id="CHEBI:58299"/>
        <dbReference type="EC" id="2.3.1.50"/>
    </reaction>
</comment>
<comment type="cofactor">
    <cofactor evidence="1">
        <name>pyridoxal 5'-phosphate</name>
        <dbReference type="ChEBI" id="CHEBI:597326"/>
    </cofactor>
</comment>
<comment type="pathway">
    <text>Lipid metabolism; sphingolipid metabolism.</text>
</comment>
<comment type="subunit">
    <text evidence="1">Lcb1 and lcb2 encode essential subunits of the enzyme and form a heterodimer.</text>
</comment>
<comment type="subcellular location">
    <subcellularLocation>
        <location evidence="1">Cytoplasm</location>
    </subcellularLocation>
    <subcellularLocation>
        <location evidence="3">Endoplasmic reticulum</location>
    </subcellularLocation>
    <subcellularLocation>
        <location evidence="4">Membrane</location>
        <topology evidence="4">Single-pass membrane protein</topology>
    </subcellularLocation>
</comment>
<comment type="similarity">
    <text evidence="4">Belongs to the class-II pyridoxal-phosphate-dependent aminotransferase family.</text>
</comment>
<feature type="chain" id="PRO_0000163861" description="Serine palmitoyltransferase 2">
    <location>
        <begin position="1"/>
        <end position="603"/>
    </location>
</feature>
<feature type="transmembrane region" description="Helical" evidence="2">
    <location>
        <begin position="90"/>
        <end position="107"/>
    </location>
</feature>
<feature type="modified residue" description="N6-(pyridoxal phosphate)lysine" evidence="1">
    <location>
        <position position="398"/>
    </location>
</feature>
<sequence length="603" mass="67519">MAQADFVSPTSIDVSEKKEVEFHKKVDHVENPPLSTESAKLEAEEVAAEKLNSEHLLENEFAPITDPTHRRVSKNPDGAELFQFEDEPSYYYVVATYLTYLVLIIIGHVRDFFGKRFHKDDYKYLKDNDGYAPLYNHFDNFYVRRLQHRINDCFSRPTMGVPGRVIRLMNRYSTDSNSTFKLTGDTSLALNVSSYNYLGFAQSHGPCATKVEEAMQKYGLSTCSSNAICGTYGLHKEVEELTANFVGKPAALVFSQGFSTNATVFSTLMCPGSLIISDELNHTSIRFGARLSGANIRVYKHNDMTDLERVLREVISQGQPRTHRPYSKILVVIEGLYSMEGNFCDLPKVVELKNRYKFYLFIDEAHSIGAIGPRGGGICDYFGISTDHVDILMGTFTKSFGAAGGYISATPNIINKLRVTNPGYVYAESMSPAVLAQIKSSFLEIMDNSPTSAGLERIERLAFNSRYIRLGLKRLGFIIFGNDDSPVVPLLLYNPGKINAFSHEMLKRGIAVVVVGYPACPLLTSRVRFCFSASHNKADMDYFLRACDEVGEKLQLKFSTGAAGEDVGKTNVEKMKKNQGWFKPPRWKIEDVLKHGVHDALTQ</sequence>
<evidence type="ECO:0000250" key="1"/>
<evidence type="ECO:0000255" key="2"/>
<evidence type="ECO:0000269" key="3">
    <source>
    </source>
</evidence>
<evidence type="ECO:0000305" key="4"/>
<gene>
    <name type="primary">lcb2</name>
    <name type="ORF">SPAC21E11.08</name>
    <name type="ORF">SPAC2C4.02</name>
</gene>
<organism>
    <name type="scientific">Schizosaccharomyces pombe (strain 972 / ATCC 24843)</name>
    <name type="common">Fission yeast</name>
    <dbReference type="NCBI Taxonomy" id="284812"/>
    <lineage>
        <taxon>Eukaryota</taxon>
        <taxon>Fungi</taxon>
        <taxon>Dikarya</taxon>
        <taxon>Ascomycota</taxon>
        <taxon>Taphrinomycotina</taxon>
        <taxon>Schizosaccharomycetes</taxon>
        <taxon>Schizosaccharomycetales</taxon>
        <taxon>Schizosaccharomycetaceae</taxon>
        <taxon>Schizosaccharomyces</taxon>
    </lineage>
</organism>
<dbReference type="EC" id="2.3.1.50"/>
<dbReference type="EMBL" id="U15645">
    <property type="protein sequence ID" value="AAC49534.1"/>
    <property type="molecule type" value="Genomic_DNA"/>
</dbReference>
<dbReference type="EMBL" id="CU329670">
    <property type="protein sequence ID" value="CAA91967.3"/>
    <property type="molecule type" value="Genomic_DNA"/>
</dbReference>
<dbReference type="PIR" id="JC5183">
    <property type="entry name" value="JC5183"/>
</dbReference>
<dbReference type="RefSeq" id="XP_001713103.1">
    <property type="nucleotide sequence ID" value="XM_001713051.2"/>
</dbReference>
<dbReference type="SMR" id="Q09925"/>
<dbReference type="BioGRID" id="280491">
    <property type="interactions" value="5"/>
</dbReference>
<dbReference type="FunCoup" id="Q09925">
    <property type="interactions" value="171"/>
</dbReference>
<dbReference type="STRING" id="284812.Q09925"/>
<dbReference type="iPTMnet" id="Q09925"/>
<dbReference type="PaxDb" id="4896-SPAC21E11.08.1"/>
<dbReference type="EnsemblFungi" id="SPAC21E11.08.1">
    <property type="protein sequence ID" value="SPAC21E11.08.1:pep"/>
    <property type="gene ID" value="SPAC21E11.08"/>
</dbReference>
<dbReference type="PomBase" id="SPAC21E11.08">
    <property type="gene designation" value="lcb2"/>
</dbReference>
<dbReference type="VEuPathDB" id="FungiDB:SPAC21E11.08"/>
<dbReference type="eggNOG" id="KOG1357">
    <property type="taxonomic scope" value="Eukaryota"/>
</dbReference>
<dbReference type="HOGENOM" id="CLU_015846_7_2_1"/>
<dbReference type="InParanoid" id="Q09925"/>
<dbReference type="OMA" id="QPRANGC"/>
<dbReference type="PhylomeDB" id="Q09925"/>
<dbReference type="UniPathway" id="UPA00222"/>
<dbReference type="PRO" id="PR:Q09925"/>
<dbReference type="Proteomes" id="UP000002485">
    <property type="component" value="Chromosome I"/>
</dbReference>
<dbReference type="GO" id="GO:0005783">
    <property type="term" value="C:endoplasmic reticulum"/>
    <property type="evidence" value="ECO:0007005"/>
    <property type="project" value="PomBase"/>
</dbReference>
<dbReference type="GO" id="GO:0016020">
    <property type="term" value="C:membrane"/>
    <property type="evidence" value="ECO:0007669"/>
    <property type="project" value="UniProtKB-SubCell"/>
</dbReference>
<dbReference type="GO" id="GO:0017059">
    <property type="term" value="C:serine palmitoyltransferase complex"/>
    <property type="evidence" value="ECO:0000318"/>
    <property type="project" value="GO_Central"/>
</dbReference>
<dbReference type="GO" id="GO:0030170">
    <property type="term" value="F:pyridoxal phosphate binding"/>
    <property type="evidence" value="ECO:0007669"/>
    <property type="project" value="InterPro"/>
</dbReference>
<dbReference type="GO" id="GO:0004758">
    <property type="term" value="F:serine C-palmitoyltransferase activity"/>
    <property type="evidence" value="ECO:0000318"/>
    <property type="project" value="GO_Central"/>
</dbReference>
<dbReference type="GO" id="GO:0046513">
    <property type="term" value="P:ceramide biosynthetic process"/>
    <property type="evidence" value="ECO:0000318"/>
    <property type="project" value="GO_Central"/>
</dbReference>
<dbReference type="GO" id="GO:0046512">
    <property type="term" value="P:sphingosine biosynthetic process"/>
    <property type="evidence" value="ECO:0000318"/>
    <property type="project" value="GO_Central"/>
</dbReference>
<dbReference type="CDD" id="cd06454">
    <property type="entry name" value="KBL_like"/>
    <property type="match status" value="1"/>
</dbReference>
<dbReference type="Gene3D" id="3.90.1150.10">
    <property type="entry name" value="Aspartate Aminotransferase, domain 1"/>
    <property type="match status" value="1"/>
</dbReference>
<dbReference type="Gene3D" id="3.40.640.10">
    <property type="entry name" value="Type I PLP-dependent aspartate aminotransferase-like (Major domain)"/>
    <property type="match status" value="1"/>
</dbReference>
<dbReference type="InterPro" id="IPR001917">
    <property type="entry name" value="Aminotrans_II_pyridoxalP_BS"/>
</dbReference>
<dbReference type="InterPro" id="IPR004839">
    <property type="entry name" value="Aminotransferase_I/II_large"/>
</dbReference>
<dbReference type="InterPro" id="IPR050087">
    <property type="entry name" value="AON_synthase_class-II"/>
</dbReference>
<dbReference type="InterPro" id="IPR015424">
    <property type="entry name" value="PyrdxlP-dep_Trfase"/>
</dbReference>
<dbReference type="InterPro" id="IPR015421">
    <property type="entry name" value="PyrdxlP-dep_Trfase_major"/>
</dbReference>
<dbReference type="InterPro" id="IPR015422">
    <property type="entry name" value="PyrdxlP-dep_Trfase_small"/>
</dbReference>
<dbReference type="PANTHER" id="PTHR13693">
    <property type="entry name" value="CLASS II AMINOTRANSFERASE/8-AMINO-7-OXONONANOATE SYNTHASE"/>
    <property type="match status" value="1"/>
</dbReference>
<dbReference type="PANTHER" id="PTHR13693:SF3">
    <property type="entry name" value="LD36009P"/>
    <property type="match status" value="1"/>
</dbReference>
<dbReference type="Pfam" id="PF00155">
    <property type="entry name" value="Aminotran_1_2"/>
    <property type="match status" value="1"/>
</dbReference>
<dbReference type="SUPFAM" id="SSF53383">
    <property type="entry name" value="PLP-dependent transferases"/>
    <property type="match status" value="1"/>
</dbReference>
<dbReference type="PROSITE" id="PS00599">
    <property type="entry name" value="AA_TRANSFER_CLASS_2"/>
    <property type="match status" value="1"/>
</dbReference>